<evidence type="ECO:0000255" key="1"/>
<evidence type="ECO:0000305" key="2"/>
<comment type="subcellular location">
    <subcellularLocation>
        <location evidence="2">Cell membrane</location>
        <topology evidence="2">Multi-pass membrane protein</topology>
    </subcellularLocation>
</comment>
<comment type="miscellaneous">
    <text>Disruption of this gene leads to an increase in hla (alpha-hemolysin) transcription and proteases production.</text>
</comment>
<comment type="similarity">
    <text evidence="2">Belongs to the UPF0421 family.</text>
</comment>
<name>Y2103_STAA8</name>
<keyword id="KW-1003">Cell membrane</keyword>
<keyword id="KW-0472">Membrane</keyword>
<keyword id="KW-1185">Reference proteome</keyword>
<keyword id="KW-0812">Transmembrane</keyword>
<keyword id="KW-1133">Transmembrane helix</keyword>
<proteinExistence type="inferred from homology"/>
<gene>
    <name type="ordered locus">SAOUHSC_02103</name>
</gene>
<accession>Q2FX03</accession>
<protein>
    <recommendedName>
        <fullName>UPF0421 protein SAOUHSC_02103</fullName>
    </recommendedName>
</protein>
<organism>
    <name type="scientific">Staphylococcus aureus (strain NCTC 8325 / PS 47)</name>
    <dbReference type="NCBI Taxonomy" id="93061"/>
    <lineage>
        <taxon>Bacteria</taxon>
        <taxon>Bacillati</taxon>
        <taxon>Bacillota</taxon>
        <taxon>Bacilli</taxon>
        <taxon>Bacillales</taxon>
        <taxon>Staphylococcaceae</taxon>
        <taxon>Staphylococcus</taxon>
    </lineage>
</organism>
<reference key="1">
    <citation type="book" date="2006" name="Gram positive pathogens, 2nd edition">
        <title>The Staphylococcus aureus NCTC 8325 genome.</title>
        <editorList>
            <person name="Fischetti V."/>
            <person name="Novick R."/>
            <person name="Ferretti J."/>
            <person name="Portnoy D."/>
            <person name="Rood J."/>
        </editorList>
        <authorList>
            <person name="Gillaspy A.F."/>
            <person name="Worrell V."/>
            <person name="Orvis J."/>
            <person name="Roe B.A."/>
            <person name="Dyer D.W."/>
            <person name="Iandolo J.J."/>
        </authorList>
    </citation>
    <scope>NUCLEOTIDE SEQUENCE [LARGE SCALE GENOMIC DNA]</scope>
    <source>
        <strain>NCTC 8325 / PS 47</strain>
    </source>
</reference>
<reference key="2">
    <citation type="journal article" date="2006" name="J. Bacteriol.">
        <title>Investigations into sigmaB-modulated regulatory pathways governing extracellular virulence determinant production in Staphylococcus aureus.</title>
        <authorList>
            <person name="Shaw L.N."/>
            <person name="Aish J."/>
            <person name="Davenport J.E."/>
            <person name="Brown M.C."/>
            <person name="Lithgow J.K."/>
            <person name="Simmonite K."/>
            <person name="Crossley H."/>
            <person name="Travis J."/>
            <person name="Potempa J."/>
            <person name="Foster S.J."/>
        </authorList>
    </citation>
    <scope>MUTANT STUDIES</scope>
</reference>
<sequence length="328" mass="37436">MNDQWYKHLIGARTIKTGIAIFLTAVFCMALDLTPIYAILTAVVTIEPTAKASLIKGYRRLPATVIGAGFAVLFTYLFGDQSPFTYALSATFTILFCTKLKLQVGTNVAVLTSLAMIPGIHDAYIFNFLSRTLTAIIGLVTSGLINFMVFPPKYYGQVEEKLSKTDALMYKLFYNRCQELILSRLQSDKSEKAYKNIFNLNNQVETLISYQRDELSYHKKKECDWKLLNQLTKRAYTNRLFITHLSNIIYLPKNTRVNFSGDEKMALLKISSSIKDIFYDGSFKREDDSVETLRSTIKALEISGENQIKSHILYEVLMIYRLLDSRYA</sequence>
<feature type="chain" id="PRO_0000283014" description="UPF0421 protein SAOUHSC_02103">
    <location>
        <begin position="1"/>
        <end position="328"/>
    </location>
</feature>
<feature type="transmembrane region" description="Helical" evidence="1">
    <location>
        <begin position="19"/>
        <end position="39"/>
    </location>
</feature>
<feature type="transmembrane region" description="Helical" evidence="1">
    <location>
        <begin position="61"/>
        <end position="81"/>
    </location>
</feature>
<feature type="transmembrane region" description="Helical" evidence="1">
    <location>
        <begin position="108"/>
        <end position="128"/>
    </location>
</feature>
<feature type="transmembrane region" description="Helical" evidence="1">
    <location>
        <begin position="132"/>
        <end position="152"/>
    </location>
</feature>
<dbReference type="EMBL" id="CP000253">
    <property type="protein sequence ID" value="ABD31153.1"/>
    <property type="molecule type" value="Genomic_DNA"/>
</dbReference>
<dbReference type="RefSeq" id="WP_000999713.1">
    <property type="nucleotide sequence ID" value="NZ_LS483365.1"/>
</dbReference>
<dbReference type="RefSeq" id="YP_500595.1">
    <property type="nucleotide sequence ID" value="NC_007795.1"/>
</dbReference>
<dbReference type="SMR" id="Q2FX03"/>
<dbReference type="STRING" id="93061.SAOUHSC_02103"/>
<dbReference type="PaxDb" id="1280-SAXN108_1987"/>
<dbReference type="GeneID" id="3921175"/>
<dbReference type="KEGG" id="sao:SAOUHSC_02103"/>
<dbReference type="PATRIC" id="fig|93061.5.peg.1908"/>
<dbReference type="eggNOG" id="COG4129">
    <property type="taxonomic scope" value="Bacteria"/>
</dbReference>
<dbReference type="HOGENOM" id="CLU_067028_0_0_9"/>
<dbReference type="OrthoDB" id="2690036at2"/>
<dbReference type="PRO" id="PR:Q2FX03"/>
<dbReference type="Proteomes" id="UP000008816">
    <property type="component" value="Chromosome"/>
</dbReference>
<dbReference type="GO" id="GO:0005886">
    <property type="term" value="C:plasma membrane"/>
    <property type="evidence" value="ECO:0000318"/>
    <property type="project" value="GO_Central"/>
</dbReference>
<dbReference type="InterPro" id="IPR010343">
    <property type="entry name" value="ArAE_1"/>
</dbReference>
<dbReference type="PANTHER" id="PTHR31086">
    <property type="entry name" value="ALUMINUM-ACTIVATED MALATE TRANSPORTER 10"/>
    <property type="match status" value="1"/>
</dbReference>
<dbReference type="Pfam" id="PF06081">
    <property type="entry name" value="ArAE_1"/>
    <property type="match status" value="1"/>
</dbReference>